<keyword id="KW-0150">Chloroplast</keyword>
<keyword id="KW-0472">Membrane</keyword>
<keyword id="KW-0602">Photosynthesis</keyword>
<keyword id="KW-0604">Photosystem II</keyword>
<keyword id="KW-0934">Plastid</keyword>
<keyword id="KW-0674">Reaction center</keyword>
<keyword id="KW-0793">Thylakoid</keyword>
<keyword id="KW-0812">Transmembrane</keyword>
<keyword id="KW-1133">Transmembrane helix</keyword>
<organism>
    <name type="scientific">Eucalyptus globulus subsp. globulus</name>
    <name type="common">Tasmanian blue gum</name>
    <dbReference type="NCBI Taxonomy" id="71271"/>
    <lineage>
        <taxon>Eukaryota</taxon>
        <taxon>Viridiplantae</taxon>
        <taxon>Streptophyta</taxon>
        <taxon>Embryophyta</taxon>
        <taxon>Tracheophyta</taxon>
        <taxon>Spermatophyta</taxon>
        <taxon>Magnoliopsida</taxon>
        <taxon>eudicotyledons</taxon>
        <taxon>Gunneridae</taxon>
        <taxon>Pentapetalae</taxon>
        <taxon>rosids</taxon>
        <taxon>malvids</taxon>
        <taxon>Myrtales</taxon>
        <taxon>Myrtaceae</taxon>
        <taxon>Myrtoideae</taxon>
        <taxon>Eucalypteae</taxon>
        <taxon>Eucalyptus</taxon>
    </lineage>
</organism>
<geneLocation type="chloroplast"/>
<proteinExistence type="inferred from homology"/>
<gene>
    <name evidence="1" type="primary">psbK</name>
</gene>
<protein>
    <recommendedName>
        <fullName evidence="1">Photosystem II reaction center protein K</fullName>
        <shortName evidence="1">PSII-K</shortName>
    </recommendedName>
</protein>
<dbReference type="EMBL" id="AY780259">
    <property type="protein sequence ID" value="AAX21012.1"/>
    <property type="molecule type" value="Genomic_DNA"/>
</dbReference>
<dbReference type="RefSeq" id="YP_636282.1">
    <property type="nucleotide sequence ID" value="NC_008115.1"/>
</dbReference>
<dbReference type="SMR" id="Q49L15"/>
<dbReference type="GeneID" id="4108472"/>
<dbReference type="GO" id="GO:0009535">
    <property type="term" value="C:chloroplast thylakoid membrane"/>
    <property type="evidence" value="ECO:0007669"/>
    <property type="project" value="UniProtKB-SubCell"/>
</dbReference>
<dbReference type="GO" id="GO:0009539">
    <property type="term" value="C:photosystem II reaction center"/>
    <property type="evidence" value="ECO:0007669"/>
    <property type="project" value="InterPro"/>
</dbReference>
<dbReference type="GO" id="GO:0015979">
    <property type="term" value="P:photosynthesis"/>
    <property type="evidence" value="ECO:0007669"/>
    <property type="project" value="UniProtKB-UniRule"/>
</dbReference>
<dbReference type="HAMAP" id="MF_00441">
    <property type="entry name" value="PSII_PsbK"/>
    <property type="match status" value="1"/>
</dbReference>
<dbReference type="InterPro" id="IPR003687">
    <property type="entry name" value="PSII_PsbK"/>
</dbReference>
<dbReference type="InterPro" id="IPR037270">
    <property type="entry name" value="PSII_PsbK_sf"/>
</dbReference>
<dbReference type="NCBIfam" id="NF002715">
    <property type="entry name" value="PRK02553.1"/>
    <property type="match status" value="1"/>
</dbReference>
<dbReference type="PANTHER" id="PTHR35325">
    <property type="match status" value="1"/>
</dbReference>
<dbReference type="PANTHER" id="PTHR35325:SF1">
    <property type="entry name" value="PHOTOSYSTEM II REACTION CENTER PROTEIN K"/>
    <property type="match status" value="1"/>
</dbReference>
<dbReference type="Pfam" id="PF02533">
    <property type="entry name" value="PsbK"/>
    <property type="match status" value="1"/>
</dbReference>
<dbReference type="SUPFAM" id="SSF161037">
    <property type="entry name" value="Photosystem II reaction center protein K, PsbK"/>
    <property type="match status" value="1"/>
</dbReference>
<accession>Q49L15</accession>
<sequence>MLNIFSLICICLHSTLYSSSFFLAKLPEAYAFLNPIVDFMPVIPLLFFLLAFVWQAAVSFR</sequence>
<comment type="function">
    <text evidence="1">One of the components of the core complex of photosystem II (PSII). PSII is a light-driven water:plastoquinone oxidoreductase that uses light energy to abstract electrons from H(2)O, generating O(2) and a proton gradient subsequently used for ATP formation. It consists of a core antenna complex that captures photons, and an electron transfer chain that converts photonic excitation into a charge separation.</text>
</comment>
<comment type="subunit">
    <text evidence="1">PSII is composed of 1 copy each of membrane proteins PsbA, PsbB, PsbC, PsbD, PsbE, PsbF, PsbH, PsbI, PsbJ, PsbK, PsbL, PsbM, PsbT, PsbX, PsbY, PsbZ, Psb30/Ycf12, at least 3 peripheral proteins of the oxygen-evolving complex and a large number of cofactors. It forms dimeric complexes.</text>
</comment>
<comment type="subcellular location">
    <subcellularLocation>
        <location evidence="1">Plastid</location>
        <location evidence="1">Chloroplast thylakoid membrane</location>
        <topology evidence="1">Single-pass membrane protein</topology>
    </subcellularLocation>
</comment>
<comment type="similarity">
    <text evidence="1">Belongs to the PsbK family.</text>
</comment>
<name>PSBK_EUCGG</name>
<reference key="1">
    <citation type="journal article" date="2005" name="DNA Res.">
        <title>Complete nucleotide sequence of the chloroplast genome from the Tasmanian blue gum, Eucalyptus globulus (Myrtaceae).</title>
        <authorList>
            <person name="Steane D.A."/>
        </authorList>
    </citation>
    <scope>NUCLEOTIDE SEQUENCE [LARGE SCALE GENOMIC DNA]</scope>
</reference>
<feature type="propeptide" id="PRO_0000276140" evidence="1">
    <location>
        <begin position="1"/>
        <end position="24"/>
    </location>
</feature>
<feature type="chain" id="PRO_0000276141" description="Photosystem II reaction center protein K" evidence="1">
    <location>
        <begin position="25"/>
        <end position="61"/>
    </location>
</feature>
<feature type="transmembrane region" description="Helical" evidence="1">
    <location>
        <begin position="36"/>
        <end position="56"/>
    </location>
</feature>
<evidence type="ECO:0000255" key="1">
    <source>
        <dbReference type="HAMAP-Rule" id="MF_00441"/>
    </source>
</evidence>